<name>ZHD6_ARATH</name>
<organism>
    <name type="scientific">Arabidopsis thaliana</name>
    <name type="common">Mouse-ear cress</name>
    <dbReference type="NCBI Taxonomy" id="3702"/>
    <lineage>
        <taxon>Eukaryota</taxon>
        <taxon>Viridiplantae</taxon>
        <taxon>Streptophyta</taxon>
        <taxon>Embryophyta</taxon>
        <taxon>Tracheophyta</taxon>
        <taxon>Spermatophyta</taxon>
        <taxon>Magnoliopsida</taxon>
        <taxon>eudicotyledons</taxon>
        <taxon>Gunneridae</taxon>
        <taxon>Pentapetalae</taxon>
        <taxon>rosids</taxon>
        <taxon>malvids</taxon>
        <taxon>Brassicales</taxon>
        <taxon>Brassicaceae</taxon>
        <taxon>Camelineae</taxon>
        <taxon>Arabidopsis</taxon>
    </lineage>
</organism>
<protein>
    <recommendedName>
        <fullName>Zinc-finger homeodomain protein 6</fullName>
        <shortName>AtZHD6</shortName>
    </recommendedName>
    <alternativeName>
        <fullName>Homeobox protein 24</fullName>
        <shortName>AtHB-24</shortName>
    </alternativeName>
</protein>
<accession>Q9ZPW7</accession>
<keyword id="KW-0238">DNA-binding</keyword>
<keyword id="KW-0371">Homeobox</keyword>
<keyword id="KW-0479">Metal-binding</keyword>
<keyword id="KW-0539">Nucleus</keyword>
<keyword id="KW-1185">Reference proteome</keyword>
<keyword id="KW-0804">Transcription</keyword>
<keyword id="KW-0805">Transcription regulation</keyword>
<keyword id="KW-0862">Zinc</keyword>
<keyword id="KW-0863">Zinc-finger</keyword>
<reference key="1">
    <citation type="journal article" date="1999" name="Nature">
        <title>Sequence and analysis of chromosome 2 of the plant Arabidopsis thaliana.</title>
        <authorList>
            <person name="Lin X."/>
            <person name="Kaul S."/>
            <person name="Rounsley S.D."/>
            <person name="Shea T.P."/>
            <person name="Benito M.-I."/>
            <person name="Town C.D."/>
            <person name="Fujii C.Y."/>
            <person name="Mason T.M."/>
            <person name="Bowman C.L."/>
            <person name="Barnstead M.E."/>
            <person name="Feldblyum T.V."/>
            <person name="Buell C.R."/>
            <person name="Ketchum K.A."/>
            <person name="Lee J.J."/>
            <person name="Ronning C.M."/>
            <person name="Koo H.L."/>
            <person name="Moffat K.S."/>
            <person name="Cronin L.A."/>
            <person name="Shen M."/>
            <person name="Pai G."/>
            <person name="Van Aken S."/>
            <person name="Umayam L."/>
            <person name="Tallon L.J."/>
            <person name="Gill J.E."/>
            <person name="Adams M.D."/>
            <person name="Carrera A.J."/>
            <person name="Creasy T.H."/>
            <person name="Goodman H.M."/>
            <person name="Somerville C.R."/>
            <person name="Copenhaver G.P."/>
            <person name="Preuss D."/>
            <person name="Nierman W.C."/>
            <person name="White O."/>
            <person name="Eisen J.A."/>
            <person name="Salzberg S.L."/>
            <person name="Fraser C.M."/>
            <person name="Venter J.C."/>
        </authorList>
    </citation>
    <scope>NUCLEOTIDE SEQUENCE [LARGE SCALE GENOMIC DNA]</scope>
    <source>
        <strain>cv. Columbia</strain>
    </source>
</reference>
<reference key="2">
    <citation type="journal article" date="2017" name="Plant J.">
        <title>Araport11: a complete reannotation of the Arabidopsis thaliana reference genome.</title>
        <authorList>
            <person name="Cheng C.Y."/>
            <person name="Krishnakumar V."/>
            <person name="Chan A.P."/>
            <person name="Thibaud-Nissen F."/>
            <person name="Schobel S."/>
            <person name="Town C.D."/>
        </authorList>
    </citation>
    <scope>GENOME REANNOTATION</scope>
    <source>
        <strain>cv. Columbia</strain>
    </source>
</reference>
<reference key="3">
    <citation type="submission" date="2002-03" db="EMBL/GenBank/DDBJ databases">
        <title>Full-length cDNA from Arabidopsis thaliana.</title>
        <authorList>
            <person name="Brover V.V."/>
            <person name="Troukhan M.E."/>
            <person name="Alexandrov N.A."/>
            <person name="Lu Y.-P."/>
            <person name="Flavell R.B."/>
            <person name="Feldmann K.A."/>
        </authorList>
    </citation>
    <scope>NUCLEOTIDE SEQUENCE [LARGE SCALE MRNA]</scope>
</reference>
<reference key="4">
    <citation type="journal article" date="2006" name="Plant Physiol.">
        <title>The Arabidopsis zinc finger-homeodomain genes encode proteins with unique biochemical properties that are coordinately expressed during floral development.</title>
        <authorList>
            <person name="Tan Q.K."/>
            <person name="Irish V.F."/>
        </authorList>
    </citation>
    <scope>INTERACTION WITH ZHD1; ZHD2; ZHD10 AND ZHD11</scope>
    <scope>TISSUE SPECIFICITY</scope>
    <scope>GENE FAMILY</scope>
</reference>
<reference key="5">
    <citation type="journal article" date="2008" name="J. Integr. Plant Biol.">
        <title>Phylogenetic analysis of the plant-specific zinc finger-homeobox and mini zinc finger gene families.</title>
        <authorList>
            <person name="Hu W."/>
            <person name="dePamphilis C.W."/>
            <person name="Ma H."/>
        </authorList>
    </citation>
    <scope>GENE FAMILY</scope>
    <scope>NOMENCLATURE</scope>
</reference>
<reference key="6">
    <citation type="journal article" date="2011" name="J. Biol. Chem.">
        <title>Nuclear import and DNA binding of the ZHD5 transcription factor is modulated by a competitive peptide inhibitor in Arabidopsis.</title>
        <authorList>
            <person name="Hong S.-Y."/>
            <person name="Kim O.-K."/>
            <person name="Kim S.-G."/>
            <person name="Yang M.-S."/>
            <person name="Park C.-M."/>
        </authorList>
    </citation>
    <scope>INTERACTION WITH MIF1 AND MIF3</scope>
    <scope>GENE FAMILY</scope>
    <scope>NOMENCLATURE</scope>
    <source>
        <strain>cv. Columbia</strain>
    </source>
</reference>
<comment type="function">
    <text>Putative transcription factor.</text>
</comment>
<comment type="subunit">
    <text evidence="1 4 5">Homo- and heterodimer with other ZFHD proteins (By similarity). Interacts with MIF1 and MIF3; these interactions prevent nuclear localization and DNA-binding to inhibit transcription regulation activity. Binds to ZHD1, ZHD2, ZHD10 and ZHD11.</text>
</comment>
<comment type="interaction">
    <interactant intactId="EBI-1806363">
        <id>Q9ZPW7</id>
    </interactant>
    <interactant intactId="EBI-1806298">
        <id>Q9FIW9</id>
        <label>ZHD10</label>
    </interactant>
    <organismsDiffer>false</organismsDiffer>
    <experiments>5</experiments>
</comment>
<comment type="interaction">
    <interactant intactId="EBI-1806363">
        <id>Q9ZPW7</id>
    </interactant>
    <interactant intactId="EBI-1806440">
        <id>Q9LHF0</id>
        <label>ZHD9</label>
    </interactant>
    <organismsDiffer>false</organismsDiffer>
    <experiments>3</experiments>
</comment>
<comment type="subcellular location">
    <subcellularLocation>
        <location evidence="1">Nucleus</location>
    </subcellularLocation>
    <text evidence="1">Interactions with MIF proteins prevent nuclear subcellular location and leads to a scattered repartition throughout the cytoplasm.</text>
</comment>
<comment type="tissue specificity">
    <text evidence="4">Expressed in seedlings, roots, leaves, stems, flowers and inflorescence.</text>
</comment>
<comment type="domain">
    <text>The homeodomain differs form the typical one by having namely 4 instead of 3 extra amino acids inserted in the loop between helix 1 and helix 2.</text>
</comment>
<sequence>MEVREKKDEKMEMTRRKSSALDHHRLPPYTYSQTANKEKPTTKRNGSDPDPDPDLDTNPISISHAPRSYARPQTTSPGKARYRECQKNHAASSGGHVVDGCGEFMSSGEEGTVESLLCAACDCHRSFHRKEIDGLFVVNFNSFGHSQRPLGSRHVSPIMMSFGGGGGCAAESSTEDLNKFHQSFSGYGVDQFHHYQPKKRFRTKFNEEQKEKMMEFAEKIGWRMTKLEDDEVNRFCREIKVKRQVFKVWMHNNKQAAKKKDL</sequence>
<proteinExistence type="evidence at protein level"/>
<feature type="chain" id="PRO_0000426020" description="Zinc-finger homeodomain protein 6">
    <location>
        <begin position="1"/>
        <end position="262"/>
    </location>
</feature>
<feature type="zinc finger region" description="ZF-HD dimerization-type; degenerate" evidence="2">
    <location>
        <begin position="82"/>
        <end position="131"/>
    </location>
</feature>
<feature type="DNA-binding region" description="Homeobox">
    <location>
        <begin position="198"/>
        <end position="261"/>
    </location>
</feature>
<feature type="region of interest" description="Disordered" evidence="3">
    <location>
        <begin position="1"/>
        <end position="93"/>
    </location>
</feature>
<feature type="compositionally biased region" description="Basic and acidic residues" evidence="3">
    <location>
        <begin position="1"/>
        <end position="25"/>
    </location>
</feature>
<feature type="compositionally biased region" description="Basic and acidic residues" evidence="3">
    <location>
        <begin position="36"/>
        <end position="47"/>
    </location>
</feature>
<feature type="site" description="Required for DNA-binding" evidence="1">
    <location>
        <position position="250"/>
    </location>
</feature>
<dbReference type="EMBL" id="AC006439">
    <property type="protein sequence ID" value="AAD15502.1"/>
    <property type="molecule type" value="Genomic_DNA"/>
</dbReference>
<dbReference type="EMBL" id="CP002685">
    <property type="protein sequence ID" value="AEC06760.1"/>
    <property type="molecule type" value="Genomic_DNA"/>
</dbReference>
<dbReference type="EMBL" id="AY088255">
    <property type="protein sequence ID" value="AAM65795.1"/>
    <property type="molecule type" value="mRNA"/>
</dbReference>
<dbReference type="PIR" id="C84563">
    <property type="entry name" value="C84563"/>
</dbReference>
<dbReference type="RefSeq" id="NP_565436.1">
    <property type="nucleotide sequence ID" value="NM_127392.1"/>
</dbReference>
<dbReference type="SMR" id="Q9ZPW7"/>
<dbReference type="BioGRID" id="1707">
    <property type="interactions" value="18"/>
</dbReference>
<dbReference type="FunCoup" id="Q9ZPW7">
    <property type="interactions" value="116"/>
</dbReference>
<dbReference type="IntAct" id="Q9ZPW7">
    <property type="interactions" value="19"/>
</dbReference>
<dbReference type="STRING" id="3702.Q9ZPW7"/>
<dbReference type="iPTMnet" id="Q9ZPW7"/>
<dbReference type="PaxDb" id="3702-AT2G18350.1"/>
<dbReference type="ProteomicsDB" id="232307"/>
<dbReference type="EnsemblPlants" id="AT2G18350.1">
    <property type="protein sequence ID" value="AT2G18350.1"/>
    <property type="gene ID" value="AT2G18350"/>
</dbReference>
<dbReference type="GeneID" id="816350"/>
<dbReference type="Gramene" id="AT2G18350.1">
    <property type="protein sequence ID" value="AT2G18350.1"/>
    <property type="gene ID" value="AT2G18350"/>
</dbReference>
<dbReference type="KEGG" id="ath:AT2G18350"/>
<dbReference type="Araport" id="AT2G18350"/>
<dbReference type="TAIR" id="AT2G18350">
    <property type="gene designation" value="HB24"/>
</dbReference>
<dbReference type="eggNOG" id="ENOG502QZSB">
    <property type="taxonomic scope" value="Eukaryota"/>
</dbReference>
<dbReference type="HOGENOM" id="CLU_039237_2_0_1"/>
<dbReference type="InParanoid" id="Q9ZPW7"/>
<dbReference type="OMA" id="KIGWRMT"/>
<dbReference type="OrthoDB" id="1910053at2759"/>
<dbReference type="PhylomeDB" id="Q9ZPW7"/>
<dbReference type="PRO" id="PR:Q9ZPW7"/>
<dbReference type="Proteomes" id="UP000006548">
    <property type="component" value="Chromosome 2"/>
</dbReference>
<dbReference type="ExpressionAtlas" id="Q9ZPW7">
    <property type="expression patterns" value="baseline and differential"/>
</dbReference>
<dbReference type="GO" id="GO:0005634">
    <property type="term" value="C:nucleus"/>
    <property type="evidence" value="ECO:0000250"/>
    <property type="project" value="UniProtKB"/>
</dbReference>
<dbReference type="GO" id="GO:0003677">
    <property type="term" value="F:DNA binding"/>
    <property type="evidence" value="ECO:0000250"/>
    <property type="project" value="TAIR"/>
</dbReference>
<dbReference type="GO" id="GO:0042803">
    <property type="term" value="F:protein homodimerization activity"/>
    <property type="evidence" value="ECO:0000250"/>
    <property type="project" value="UniProtKB"/>
</dbReference>
<dbReference type="GO" id="GO:0008270">
    <property type="term" value="F:zinc ion binding"/>
    <property type="evidence" value="ECO:0007669"/>
    <property type="project" value="UniProtKB-KW"/>
</dbReference>
<dbReference type="FunFam" id="1.10.10.60:FF:000257">
    <property type="entry name" value="Zinc-finger homeodomain protein 2"/>
    <property type="match status" value="1"/>
</dbReference>
<dbReference type="Gene3D" id="1.10.10.60">
    <property type="entry name" value="Homeodomain-like"/>
    <property type="match status" value="1"/>
</dbReference>
<dbReference type="InterPro" id="IPR009057">
    <property type="entry name" value="Homeodomain-like_sf"/>
</dbReference>
<dbReference type="InterPro" id="IPR006455">
    <property type="entry name" value="Homeodomain_ZF_HD"/>
</dbReference>
<dbReference type="InterPro" id="IPR006456">
    <property type="entry name" value="ZF_HD_homeobox_Cys/His_dimer"/>
</dbReference>
<dbReference type="NCBIfam" id="TIGR01565">
    <property type="entry name" value="homeo_ZF_HD"/>
    <property type="match status" value="1"/>
</dbReference>
<dbReference type="NCBIfam" id="TIGR01566">
    <property type="entry name" value="ZF_HD_prot_N"/>
    <property type="match status" value="1"/>
</dbReference>
<dbReference type="PANTHER" id="PTHR31948">
    <property type="entry name" value="ZINC-FINGER HOMEODOMAIN PROTEIN 2"/>
    <property type="match status" value="1"/>
</dbReference>
<dbReference type="PANTHER" id="PTHR31948:SF64">
    <property type="entry name" value="ZINC-FINGER HOMEODOMAIN PROTEIN 6"/>
    <property type="match status" value="1"/>
</dbReference>
<dbReference type="Pfam" id="PF04770">
    <property type="entry name" value="ZF-HD_dimer"/>
    <property type="match status" value="1"/>
</dbReference>
<dbReference type="SUPFAM" id="SSF46689">
    <property type="entry name" value="Homeodomain-like"/>
    <property type="match status" value="1"/>
</dbReference>
<dbReference type="PROSITE" id="PS51523">
    <property type="entry name" value="ZF_HD_DIMER"/>
    <property type="match status" value="1"/>
</dbReference>
<evidence type="ECO:0000250" key="1"/>
<evidence type="ECO:0000255" key="2">
    <source>
        <dbReference type="PROSITE-ProRule" id="PRU00856"/>
    </source>
</evidence>
<evidence type="ECO:0000256" key="3">
    <source>
        <dbReference type="SAM" id="MobiDB-lite"/>
    </source>
</evidence>
<evidence type="ECO:0000269" key="4">
    <source>
    </source>
</evidence>
<evidence type="ECO:0000269" key="5">
    <source>
    </source>
</evidence>
<gene>
    <name type="primary">ZHD6</name>
    <name type="synonym">HB24</name>
    <name type="ordered locus">At2g18350</name>
    <name type="ORF">T30D6.14</name>
</gene>